<accession>A1AXY8</accession>
<feature type="chain" id="PRO_1000045838" description="Glutathione-dependent formaldehyde-activating enzyme">
    <location>
        <begin position="1"/>
        <end position="194"/>
    </location>
</feature>
<feature type="domain" description="CENP-V/GFA" evidence="2">
    <location>
        <begin position="24"/>
        <end position="171"/>
    </location>
</feature>
<feature type="binding site" evidence="1 2">
    <location>
        <position position="31"/>
    </location>
    <ligand>
        <name>Zn(2+)</name>
        <dbReference type="ChEBI" id="CHEBI:29105"/>
        <label>1</label>
        <note>structural</note>
    </ligand>
</feature>
<feature type="binding site" evidence="1 2">
    <location>
        <position position="33"/>
    </location>
    <ligand>
        <name>Zn(2+)</name>
        <dbReference type="ChEBI" id="CHEBI:29105"/>
        <label>1</label>
        <note>structural</note>
    </ligand>
</feature>
<feature type="binding site" evidence="1 2">
    <location>
        <position position="52"/>
    </location>
    <ligand>
        <name>Zn(2+)</name>
        <dbReference type="ChEBI" id="CHEBI:29105"/>
        <label>2</label>
        <note>catalytic</note>
    </ligand>
</feature>
<feature type="binding site" evidence="1 2">
    <location>
        <position position="54"/>
    </location>
    <ligand>
        <name>Zn(2+)</name>
        <dbReference type="ChEBI" id="CHEBI:29105"/>
        <label>2</label>
        <note>catalytic</note>
    </ligand>
</feature>
<feature type="binding site" evidence="1 2">
    <location>
        <position position="57"/>
    </location>
    <ligand>
        <name>Zn(2+)</name>
        <dbReference type="ChEBI" id="CHEBI:29105"/>
        <label>2</label>
        <note>catalytic</note>
    </ligand>
</feature>
<feature type="binding site" evidence="1 2">
    <location>
        <position position="99"/>
    </location>
    <ligand>
        <name>Zn(2+)</name>
        <dbReference type="ChEBI" id="CHEBI:29105"/>
        <label>1</label>
        <note>structural</note>
    </ligand>
</feature>
<feature type="binding site" evidence="1 2">
    <location>
        <position position="102"/>
    </location>
    <ligand>
        <name>Zn(2+)</name>
        <dbReference type="ChEBI" id="CHEBI:29105"/>
        <label>1</label>
        <note>structural</note>
    </ligand>
</feature>
<proteinExistence type="inferred from homology"/>
<evidence type="ECO:0000255" key="1">
    <source>
        <dbReference type="HAMAP-Rule" id="MF_00723"/>
    </source>
</evidence>
<evidence type="ECO:0000255" key="2">
    <source>
        <dbReference type="PROSITE-ProRule" id="PRU01239"/>
    </source>
</evidence>
<sequence>MVDTSGVKIHPAVDNGIKPAQPGFAGGTLHCKCSTNPVRVAVRAQTAHNHVCGCTKCWKPEGAIFSQVAVVGRDALEVLEGAEKLEIVNAEAPIQRHRCRDCGVHMYGRIENRDHPFYGLDFVHTELSDEDGWSAPEFAAFVSSIIESGVDPSRMEAIRARLRELGLEPYDALSPPLMDAIATHIAKRSGALAA</sequence>
<keyword id="KW-0456">Lyase</keyword>
<keyword id="KW-0479">Metal-binding</keyword>
<keyword id="KW-1185">Reference proteome</keyword>
<keyword id="KW-0862">Zinc</keyword>
<comment type="function">
    <text evidence="1">Catalyzes the condensation of formaldehyde and glutathione to S-hydroxymethylglutathione.</text>
</comment>
<comment type="catalytic activity">
    <reaction evidence="1">
        <text>S-(hydroxymethyl)glutathione = glutathione + formaldehyde</text>
        <dbReference type="Rhea" id="RHEA:22488"/>
        <dbReference type="ChEBI" id="CHEBI:16842"/>
        <dbReference type="ChEBI" id="CHEBI:57925"/>
        <dbReference type="ChEBI" id="CHEBI:58758"/>
        <dbReference type="EC" id="4.4.1.22"/>
    </reaction>
</comment>
<comment type="cofactor">
    <cofactor evidence="1 2">
        <name>Zn(2+)</name>
        <dbReference type="ChEBI" id="CHEBI:29105"/>
    </cofactor>
    <text evidence="1 2">Binds 2 Zn(2+) ions per subunit.</text>
</comment>
<comment type="pathway">
    <text evidence="1">One-carbon metabolism; formaldehyde degradation; formate from formaldehyde (glutathione route): step 1/3.</text>
</comment>
<comment type="similarity">
    <text evidence="1">Belongs to the Gfa family.</text>
</comment>
<reference key="1">
    <citation type="submission" date="2006-12" db="EMBL/GenBank/DDBJ databases">
        <title>Complete sequence of chromosome 1 of Paracoccus denitrificans PD1222.</title>
        <authorList>
            <person name="Copeland A."/>
            <person name="Lucas S."/>
            <person name="Lapidus A."/>
            <person name="Barry K."/>
            <person name="Detter J.C."/>
            <person name="Glavina del Rio T."/>
            <person name="Hammon N."/>
            <person name="Israni S."/>
            <person name="Dalin E."/>
            <person name="Tice H."/>
            <person name="Pitluck S."/>
            <person name="Munk A.C."/>
            <person name="Brettin T."/>
            <person name="Bruce D."/>
            <person name="Han C."/>
            <person name="Tapia R."/>
            <person name="Gilna P."/>
            <person name="Schmutz J."/>
            <person name="Larimer F."/>
            <person name="Land M."/>
            <person name="Hauser L."/>
            <person name="Kyrpides N."/>
            <person name="Lykidis A."/>
            <person name="Spiro S."/>
            <person name="Richardson D.J."/>
            <person name="Moir J.W.B."/>
            <person name="Ferguson S.J."/>
            <person name="van Spanning R.J.M."/>
            <person name="Richardson P."/>
        </authorList>
    </citation>
    <scope>NUCLEOTIDE SEQUENCE [LARGE SCALE GENOMIC DNA]</scope>
    <source>
        <strain>Pd 1222</strain>
    </source>
</reference>
<gene>
    <name evidence="1" type="primary">gfa</name>
    <name type="ordered locus">Pden_0015</name>
</gene>
<protein>
    <recommendedName>
        <fullName evidence="1">Glutathione-dependent formaldehyde-activating enzyme</fullName>
        <ecNumber evidence="1">4.4.1.22</ecNumber>
    </recommendedName>
    <alternativeName>
        <fullName evidence="1">S-(hydroxymethyl)glutathione synthase</fullName>
    </alternativeName>
</protein>
<organism>
    <name type="scientific">Paracoccus denitrificans (strain Pd 1222)</name>
    <dbReference type="NCBI Taxonomy" id="318586"/>
    <lineage>
        <taxon>Bacteria</taxon>
        <taxon>Pseudomonadati</taxon>
        <taxon>Pseudomonadota</taxon>
        <taxon>Alphaproteobacteria</taxon>
        <taxon>Rhodobacterales</taxon>
        <taxon>Paracoccaceae</taxon>
        <taxon>Paracoccus</taxon>
    </lineage>
</organism>
<name>GFA_PARDP</name>
<dbReference type="EC" id="4.4.1.22" evidence="1"/>
<dbReference type="EMBL" id="CP000489">
    <property type="protein sequence ID" value="ABL68132.1"/>
    <property type="molecule type" value="Genomic_DNA"/>
</dbReference>
<dbReference type="RefSeq" id="WP_011746365.1">
    <property type="nucleotide sequence ID" value="NC_008686.1"/>
</dbReference>
<dbReference type="SMR" id="A1AXY8"/>
<dbReference type="STRING" id="318586.Pden_0015"/>
<dbReference type="EnsemblBacteria" id="ABL68132">
    <property type="protein sequence ID" value="ABL68132"/>
    <property type="gene ID" value="Pden_0015"/>
</dbReference>
<dbReference type="GeneID" id="93451246"/>
<dbReference type="KEGG" id="pde:Pden_0015"/>
<dbReference type="eggNOG" id="COG3791">
    <property type="taxonomic scope" value="Bacteria"/>
</dbReference>
<dbReference type="HOGENOM" id="CLU_090716_0_0_5"/>
<dbReference type="OrthoDB" id="9011205at2"/>
<dbReference type="UniPathway" id="UPA00562">
    <property type="reaction ID" value="UER00621"/>
</dbReference>
<dbReference type="Proteomes" id="UP000000361">
    <property type="component" value="Chromosome 1"/>
</dbReference>
<dbReference type="GO" id="GO:0051907">
    <property type="term" value="F:S-(hydroxymethyl)glutathione synthase activity"/>
    <property type="evidence" value="ECO:0007669"/>
    <property type="project" value="UniProtKB-UniRule"/>
</dbReference>
<dbReference type="GO" id="GO:0008270">
    <property type="term" value="F:zinc ion binding"/>
    <property type="evidence" value="ECO:0007669"/>
    <property type="project" value="UniProtKB-UniRule"/>
</dbReference>
<dbReference type="GO" id="GO:0046294">
    <property type="term" value="P:formaldehyde catabolic process"/>
    <property type="evidence" value="ECO:0007669"/>
    <property type="project" value="UniProtKB-UniRule"/>
</dbReference>
<dbReference type="Gene3D" id="3.90.1590.10">
    <property type="entry name" value="glutathione-dependent formaldehyde- activating enzyme (gfa)"/>
    <property type="match status" value="1"/>
</dbReference>
<dbReference type="HAMAP" id="MF_00723">
    <property type="entry name" value="Formald_GSH"/>
    <property type="match status" value="1"/>
</dbReference>
<dbReference type="InterPro" id="IPR006913">
    <property type="entry name" value="CENP-V/GFA"/>
</dbReference>
<dbReference type="InterPro" id="IPR014185">
    <property type="entry name" value="Formald_GSH"/>
</dbReference>
<dbReference type="InterPro" id="IPR011057">
    <property type="entry name" value="Mss4-like_sf"/>
</dbReference>
<dbReference type="NCBIfam" id="TIGR02820">
    <property type="entry name" value="formald_GSH"/>
    <property type="match status" value="1"/>
</dbReference>
<dbReference type="NCBIfam" id="NF003829">
    <property type="entry name" value="PRK05417.1"/>
    <property type="match status" value="1"/>
</dbReference>
<dbReference type="PANTHER" id="PTHR33337:SF40">
    <property type="entry name" value="CENP-V_GFA DOMAIN-CONTAINING PROTEIN-RELATED"/>
    <property type="match status" value="1"/>
</dbReference>
<dbReference type="PANTHER" id="PTHR33337">
    <property type="entry name" value="GFA DOMAIN-CONTAINING PROTEIN"/>
    <property type="match status" value="1"/>
</dbReference>
<dbReference type="Pfam" id="PF04828">
    <property type="entry name" value="GFA"/>
    <property type="match status" value="1"/>
</dbReference>
<dbReference type="PIRSF" id="PIRSF033318">
    <property type="entry name" value="Formald_GSH"/>
    <property type="match status" value="1"/>
</dbReference>
<dbReference type="SUPFAM" id="SSF51316">
    <property type="entry name" value="Mss4-like"/>
    <property type="match status" value="1"/>
</dbReference>
<dbReference type="PROSITE" id="PS51891">
    <property type="entry name" value="CENP_V_GFA"/>
    <property type="match status" value="1"/>
</dbReference>